<keyword id="KW-0067">ATP-binding</keyword>
<keyword id="KW-0237">DNA synthesis</keyword>
<keyword id="KW-0244">Early protein</keyword>
<keyword id="KW-0418">Kinase</keyword>
<keyword id="KW-0547">Nucleotide-binding</keyword>
<keyword id="KW-0808">Transferase</keyword>
<organism>
    <name type="scientific">Infectious laryngotracheitis virus (strain Thorne V882)</name>
    <name type="common">ILTV</name>
    <name type="synonym">Gallid herpesvirus 1</name>
    <dbReference type="NCBI Taxonomy" id="10344"/>
    <lineage>
        <taxon>Viruses</taxon>
        <taxon>Duplodnaviria</taxon>
        <taxon>Heunggongvirae</taxon>
        <taxon>Peploviricota</taxon>
        <taxon>Herviviricetes</taxon>
        <taxon>Herpesvirales</taxon>
        <taxon>Orthoherpesviridae</taxon>
        <taxon>Alphaherpesvirinae</taxon>
        <taxon>Iltovirus</taxon>
        <taxon>Iltovirus gallidalpha1</taxon>
        <taxon>Infectious laryngotracheitis virus</taxon>
    </lineage>
</organism>
<organismHost>
    <name type="scientific">Gallus gallus</name>
    <name type="common">Chicken</name>
    <dbReference type="NCBI Taxonomy" id="9031"/>
</organismHost>
<reference key="1">
    <citation type="journal article" date="1990" name="J. Gen. Virol.">
        <title>Analysis of the nucleotide sequence of DNA from the region of the thymidine kinase gene of infectious laryngotracheitis virus; potential evolutionary relationships between the herpesvirus subfamilies.</title>
        <authorList>
            <person name="Griffin A.M."/>
            <person name="Boursnell M.E."/>
        </authorList>
    </citation>
    <scope>NUCLEOTIDE SEQUENCE [GENOMIC DNA]</scope>
</reference>
<accession>P23983</accession>
<gene>
    <name evidence="1" type="primary">TK</name>
</gene>
<name>KITH_ILTVT</name>
<comment type="function">
    <text evidence="1">Catalyzes the transfer of the gamma-phospho group of ATP to thymidine to generate dTMP in the salvage pathway of pyrimidine synthesis. The dTMP serves as a substrate for DNA polymerase during viral DNA replication. Allows the virus to be reactivated and to grow in non-proliferative cells lacking a high concentration of phosphorylated nucleic acid precursors.</text>
</comment>
<comment type="catalytic activity">
    <reaction evidence="1">
        <text>thymidine + ATP = dTMP + ADP + H(+)</text>
        <dbReference type="Rhea" id="RHEA:19129"/>
        <dbReference type="ChEBI" id="CHEBI:15378"/>
        <dbReference type="ChEBI" id="CHEBI:17748"/>
        <dbReference type="ChEBI" id="CHEBI:30616"/>
        <dbReference type="ChEBI" id="CHEBI:63528"/>
        <dbReference type="ChEBI" id="CHEBI:456216"/>
        <dbReference type="EC" id="2.7.1.21"/>
    </reaction>
</comment>
<comment type="subunit">
    <text evidence="1">Homodimer.</text>
</comment>
<comment type="similarity">
    <text evidence="1">Belongs to the herpesviridae thymidine kinase family.</text>
</comment>
<feature type="chain" id="PRO_0000175081" description="Thymidine kinase">
    <location>
        <begin position="1"/>
        <end position="364"/>
    </location>
</feature>
<feature type="active site" description="Proton acceptor" evidence="1">
    <location>
        <position position="64"/>
    </location>
</feature>
<feature type="binding site" evidence="1">
    <location>
        <begin position="36"/>
        <end position="43"/>
    </location>
    <ligand>
        <name>ATP</name>
        <dbReference type="ChEBI" id="CHEBI:30616"/>
    </ligand>
</feature>
<feature type="binding site" evidence="1">
    <location>
        <position position="108"/>
    </location>
    <ligand>
        <name>substrate</name>
    </ligand>
</feature>
<feature type="binding site" evidence="1">
    <location>
        <position position="201"/>
    </location>
    <ligand>
        <name>ATP</name>
        <dbReference type="ChEBI" id="CHEBI:30616"/>
    </ligand>
</feature>
<feature type="binding site" evidence="1">
    <location>
        <position position="207"/>
    </location>
    <ligand>
        <name>substrate</name>
    </ligand>
</feature>
<protein>
    <recommendedName>
        <fullName evidence="1">Thymidine kinase</fullName>
        <ecNumber evidence="1">2.7.1.21</ecNumber>
    </recommendedName>
</protein>
<evidence type="ECO:0000255" key="1">
    <source>
        <dbReference type="HAMAP-Rule" id="MF_04029"/>
    </source>
</evidence>
<dbReference type="EC" id="2.7.1.21" evidence="1"/>
<dbReference type="EMBL" id="D00565">
    <property type="protein sequence ID" value="BAA00442.1"/>
    <property type="molecule type" value="Genomic_DNA"/>
</dbReference>
<dbReference type="PIR" id="D43675">
    <property type="entry name" value="D43675"/>
</dbReference>
<dbReference type="SMR" id="P23983"/>
<dbReference type="KEGG" id="vg:3239035"/>
<dbReference type="GO" id="GO:0005524">
    <property type="term" value="F:ATP binding"/>
    <property type="evidence" value="ECO:0007669"/>
    <property type="project" value="UniProtKB-KW"/>
</dbReference>
<dbReference type="GO" id="GO:0004797">
    <property type="term" value="F:thymidine kinase activity"/>
    <property type="evidence" value="ECO:0007669"/>
    <property type="project" value="UniProtKB-EC"/>
</dbReference>
<dbReference type="GO" id="GO:0071897">
    <property type="term" value="P:DNA biosynthetic process"/>
    <property type="evidence" value="ECO:0007669"/>
    <property type="project" value="UniProtKB-KW"/>
</dbReference>
<dbReference type="GO" id="GO:0006230">
    <property type="term" value="P:TMP biosynthetic process"/>
    <property type="evidence" value="ECO:0007669"/>
    <property type="project" value="InterPro"/>
</dbReference>
<dbReference type="Gene3D" id="3.40.50.300">
    <property type="entry name" value="P-loop containing nucleotide triphosphate hydrolases"/>
    <property type="match status" value="1"/>
</dbReference>
<dbReference type="HAMAP" id="MF_04029">
    <property type="entry name" value="HSV_KITH"/>
    <property type="match status" value="1"/>
</dbReference>
<dbReference type="InterPro" id="IPR001889">
    <property type="entry name" value="Herpes_TK"/>
</dbReference>
<dbReference type="InterPro" id="IPR027417">
    <property type="entry name" value="P-loop_NTPase"/>
</dbReference>
<dbReference type="Pfam" id="PF00693">
    <property type="entry name" value="Herpes_TK"/>
    <property type="match status" value="1"/>
</dbReference>
<dbReference type="SUPFAM" id="SSF52540">
    <property type="entry name" value="P-loop containing nucleoside triphosphate hydrolases"/>
    <property type="match status" value="1"/>
</dbReference>
<sequence>MAVAGAVKTSGGVQFCSEFENDDSDFRRVVLLYVDGPFGVGKTVTAKTLMQMPNWRGCRLYLAEPMQAWRQWFGGADMIKEINEIQTLKASGKLECREASPVAVAEVQMTIAAPLRIMNHVIYNYLGSERCYSAAASGPDDVLFLVDRHPLAACLCFPVAQYLSGALEFGDLITLLSGIPDIPTHSNIVLMDLDICEQARRIIQRGRPGETVDWTYLCALRNSYICLMNTTTYLQRTSYPALLKEQEALTSATLLKFKRECLETATVPEINPSIDQTLFAILAFDQQNVHGERLKTVLSFVVQKLATVLKNLCIFYLPAHGLTPEACALKCLEFAETASSLTTKRAAIASLIDAVERYNADMGS</sequence>
<proteinExistence type="inferred from homology"/>